<name>CEFIP_RAT</name>
<sequence length="1422" mass="155409">MQGNKKCADGFSDTSSIGSVLDEADREVSNLTDRAFRSLCISEDTSFHDSDLALSPEITSQVSGTFHQETVSHANRKSGIWSQLPSQGTEHSGWAATFQQQPKYVQGEEKYPKNSPLPTPVQRRLEVPISGLRSSSKPISKVSSLIRSFDRTEAQPCDSRPPPSKPPALKNTPKFAHPPESGVNFCFDSAFLTVRRVPAGVSSTHQSSHQPCRAPGEPEPPTNPEIACHSSDSLLRAPDRVAGSCEPRFPSPSLKPPKAETGRGKEWISRGTFLHSENSAFESWDAHQPKLRERKDITETTPESKAPKHYEDMPLLKEPYPAESKLSPCQGRANCAQEENRSPSGIQSTSGAWGARDSGSQVFPVEGNASQIDPQVKRNQAPWRKPKTGKGGTDGPHDASEDKKQPNRKGLPLYSKLNPQGQLPENGVLDLPEESSDHYSSPFNISKLLTPIISTKHVLETSDTQPVETSPSPPGQLNGYQEKESSEAQSRDSYKSKAPSLLFNLKDVRKRVKSTYSPLPLLKGFDEKTRGKLDGKQEPLSNGVTLPNGLEENPPTAELVKETLDDAPSVLHSSTQKDPAMDSRESFADSHPTFSSPSASSKTHFSINGEAAERNSHEKEEANGESEQGLSEGGWHPDSRENLPRKHLSLKLCNRDSETGQATEKMKPRQLEKRLSRSISQETEPEREMGFQNLPVSQKFSPGPLSPEEEDVFYSDSQSDFTPCVQTKAKFSTSSSDQSFASFEDQQKMWFTEGPREDGKSHVSLGDNQKDEKETEVEKEEPQQCALHNGVEEHRQKETQRKAQGVLGGRPRKASAEEVSVRGSWTGADKDTALSHAKDPTPLPASTNKHRLFPIKDNTLRATPVIKPIILPLLRTVSSEDSLSGGHKENELPRQPWGEDAGGLGASESQEMRNTPLSNSTPSTEQKCVVYEGVEEDPVHTAAQDETSQQTRKGSFSFLPLVEEGGKTKPPPDTADERLAHEKSRSADSGKLEAPQHIPTIALHSDDLEDSPPSLPQHTCWEEQGFKSHFLSAPRAGPSGRRPVPSEAATSPNPSSLGGSSTCSPAASSIWEDASQAAGEHWQRQEPPGPGPWASPGPSGPTGLTRREDMTRGLTWEAEGSDPHLERLADFRTLSPRGIFLTGAAEKPEPSSLLEKAAGKPPAVPPKTEKALRRAKKLASKRRKSDQMSEKHTEAWEGKSFTEDAQGTEQRPVSPGKGPRPRFPEVRSLPPPTHRHSVSCGWEPAGRRPWGSQSLIPLPPYPATQKVLQDPQSGQYFVFDMPLQVKIKTFYDPETGKYVKVSVPSSEEDPSEPPLQDALTAPYLLYPGFQPVPVTSLMPLRCSSQLAAPTFLRQGSSHRPQSSQGARLQPPPERLGESAQHVSSAQRPRGPPLSPEEEGAEAPSLSIISTDDLEDFATEGVS</sequence>
<reference key="1">
    <citation type="journal article" date="2004" name="Nature">
        <title>Genome sequence of the Brown Norway rat yields insights into mammalian evolution.</title>
        <authorList>
            <person name="Gibbs R.A."/>
            <person name="Weinstock G.M."/>
            <person name="Metzker M.L."/>
            <person name="Muzny D.M."/>
            <person name="Sodergren E.J."/>
            <person name="Scherer S."/>
            <person name="Scott G."/>
            <person name="Steffen D."/>
            <person name="Worley K.C."/>
            <person name="Burch P.E."/>
            <person name="Okwuonu G."/>
            <person name="Hines S."/>
            <person name="Lewis L."/>
            <person name="Deramo C."/>
            <person name="Delgado O."/>
            <person name="Dugan-Rocha S."/>
            <person name="Miner G."/>
            <person name="Morgan M."/>
            <person name="Hawes A."/>
            <person name="Gill R."/>
            <person name="Holt R.A."/>
            <person name="Adams M.D."/>
            <person name="Amanatides P.G."/>
            <person name="Baden-Tillson H."/>
            <person name="Barnstead M."/>
            <person name="Chin S."/>
            <person name="Evans C.A."/>
            <person name="Ferriera S."/>
            <person name="Fosler C."/>
            <person name="Glodek A."/>
            <person name="Gu Z."/>
            <person name="Jennings D."/>
            <person name="Kraft C.L."/>
            <person name="Nguyen T."/>
            <person name="Pfannkoch C.M."/>
            <person name="Sitter C."/>
            <person name="Sutton G.G."/>
            <person name="Venter J.C."/>
            <person name="Woodage T."/>
            <person name="Smith D."/>
            <person name="Lee H.-M."/>
            <person name="Gustafson E."/>
            <person name="Cahill P."/>
            <person name="Kana A."/>
            <person name="Doucette-Stamm L."/>
            <person name="Weinstock K."/>
            <person name="Fechtel K."/>
            <person name="Weiss R.B."/>
            <person name="Dunn D.M."/>
            <person name="Green E.D."/>
            <person name="Blakesley R.W."/>
            <person name="Bouffard G.G."/>
            <person name="De Jong P.J."/>
            <person name="Osoegawa K."/>
            <person name="Zhu B."/>
            <person name="Marra M."/>
            <person name="Schein J."/>
            <person name="Bosdet I."/>
            <person name="Fjell C."/>
            <person name="Jones S."/>
            <person name="Krzywinski M."/>
            <person name="Mathewson C."/>
            <person name="Siddiqui A."/>
            <person name="Wye N."/>
            <person name="McPherson J."/>
            <person name="Zhao S."/>
            <person name="Fraser C.M."/>
            <person name="Shetty J."/>
            <person name="Shatsman S."/>
            <person name="Geer K."/>
            <person name="Chen Y."/>
            <person name="Abramzon S."/>
            <person name="Nierman W.C."/>
            <person name="Havlak P.H."/>
            <person name="Chen R."/>
            <person name="Durbin K.J."/>
            <person name="Egan A."/>
            <person name="Ren Y."/>
            <person name="Song X.-Z."/>
            <person name="Li B."/>
            <person name="Liu Y."/>
            <person name="Qin X."/>
            <person name="Cawley S."/>
            <person name="Cooney A.J."/>
            <person name="D'Souza L.M."/>
            <person name="Martin K."/>
            <person name="Wu J.Q."/>
            <person name="Gonzalez-Garay M.L."/>
            <person name="Jackson A.R."/>
            <person name="Kalafus K.J."/>
            <person name="McLeod M.P."/>
            <person name="Milosavljevic A."/>
            <person name="Virk D."/>
            <person name="Volkov A."/>
            <person name="Wheeler D.A."/>
            <person name="Zhang Z."/>
            <person name="Bailey J.A."/>
            <person name="Eichler E.E."/>
            <person name="Tuzun E."/>
            <person name="Birney E."/>
            <person name="Mongin E."/>
            <person name="Ureta-Vidal A."/>
            <person name="Woodwark C."/>
            <person name="Zdobnov E."/>
            <person name="Bork P."/>
            <person name="Suyama M."/>
            <person name="Torrents D."/>
            <person name="Alexandersson M."/>
            <person name="Trask B.J."/>
            <person name="Young J.M."/>
            <person name="Huang H."/>
            <person name="Wang H."/>
            <person name="Xing H."/>
            <person name="Daniels S."/>
            <person name="Gietzen D."/>
            <person name="Schmidt J."/>
            <person name="Stevens K."/>
            <person name="Vitt U."/>
            <person name="Wingrove J."/>
            <person name="Camara F."/>
            <person name="Mar Alba M."/>
            <person name="Abril J.F."/>
            <person name="Guigo R."/>
            <person name="Smit A."/>
            <person name="Dubchak I."/>
            <person name="Rubin E.M."/>
            <person name="Couronne O."/>
            <person name="Poliakov A."/>
            <person name="Huebner N."/>
            <person name="Ganten D."/>
            <person name="Goesele C."/>
            <person name="Hummel O."/>
            <person name="Kreitler T."/>
            <person name="Lee Y.-A."/>
            <person name="Monti J."/>
            <person name="Schulz H."/>
            <person name="Zimdahl H."/>
            <person name="Himmelbauer H."/>
            <person name="Lehrach H."/>
            <person name="Jacob H.J."/>
            <person name="Bromberg S."/>
            <person name="Gullings-Handley J."/>
            <person name="Jensen-Seaman M.I."/>
            <person name="Kwitek A.E."/>
            <person name="Lazar J."/>
            <person name="Pasko D."/>
            <person name="Tonellato P.J."/>
            <person name="Twigger S."/>
            <person name="Ponting C.P."/>
            <person name="Duarte J.M."/>
            <person name="Rice S."/>
            <person name="Goodstadt L."/>
            <person name="Beatson S.A."/>
            <person name="Emes R.D."/>
            <person name="Winter E.E."/>
            <person name="Webber C."/>
            <person name="Brandt P."/>
            <person name="Nyakatura G."/>
            <person name="Adetobi M."/>
            <person name="Chiaromonte F."/>
            <person name="Elnitski L."/>
            <person name="Eswara P."/>
            <person name="Hardison R.C."/>
            <person name="Hou M."/>
            <person name="Kolbe D."/>
            <person name="Makova K."/>
            <person name="Miller W."/>
            <person name="Nekrutenko A."/>
            <person name="Riemer C."/>
            <person name="Schwartz S."/>
            <person name="Taylor J."/>
            <person name="Yang S."/>
            <person name="Zhang Y."/>
            <person name="Lindpaintner K."/>
            <person name="Andrews T.D."/>
            <person name="Caccamo M."/>
            <person name="Clamp M."/>
            <person name="Clarke L."/>
            <person name="Curwen V."/>
            <person name="Durbin R.M."/>
            <person name="Eyras E."/>
            <person name="Searle S.M."/>
            <person name="Cooper G.M."/>
            <person name="Batzoglou S."/>
            <person name="Brudno M."/>
            <person name="Sidow A."/>
            <person name="Stone E.A."/>
            <person name="Payseur B.A."/>
            <person name="Bourque G."/>
            <person name="Lopez-Otin C."/>
            <person name="Puente X.S."/>
            <person name="Chakrabarti K."/>
            <person name="Chatterji S."/>
            <person name="Dewey C."/>
            <person name="Pachter L."/>
            <person name="Bray N."/>
            <person name="Yap V.B."/>
            <person name="Caspi A."/>
            <person name="Tesler G."/>
            <person name="Pevzner P.A."/>
            <person name="Haussler D."/>
            <person name="Roskin K.M."/>
            <person name="Baertsch R."/>
            <person name="Clawson H."/>
            <person name="Furey T.S."/>
            <person name="Hinrichs A.S."/>
            <person name="Karolchik D."/>
            <person name="Kent W.J."/>
            <person name="Rosenbloom K.R."/>
            <person name="Trumbower H."/>
            <person name="Weirauch M."/>
            <person name="Cooper D.N."/>
            <person name="Stenson P.D."/>
            <person name="Ma B."/>
            <person name="Brent M."/>
            <person name="Arumugam M."/>
            <person name="Shteynberg D."/>
            <person name="Copley R.R."/>
            <person name="Taylor M.S."/>
            <person name="Riethman H."/>
            <person name="Mudunuri U."/>
            <person name="Peterson J."/>
            <person name="Guyer M."/>
            <person name="Felsenfeld A."/>
            <person name="Old S."/>
            <person name="Mockrin S."/>
            <person name="Collins F.S."/>
        </authorList>
    </citation>
    <scope>NUCLEOTIDE SEQUENCE [LARGE SCALE GENOMIC DNA]</scope>
    <source>
        <strain>Brown Norway</strain>
    </source>
</reference>
<reference key="2">
    <citation type="journal article" date="2017" name="J. Biol. Chem.">
        <title>The novel cardiac z-disc protein CEFIP regulates cardiomyocyte hypertrophy by modulating calcineurin signaling.</title>
        <authorList>
            <person name="Dierck F."/>
            <person name="Kuhn C."/>
            <person name="Rohr C."/>
            <person name="Hille S."/>
            <person name="Braune J."/>
            <person name="Sossalla S."/>
            <person name="Molt S."/>
            <person name="van der Ven P.F.M."/>
            <person name="Fuerst D.O."/>
            <person name="Frey N."/>
        </authorList>
    </citation>
    <scope>FUNCTION</scope>
    <scope>SUBCELLULAR LOCATION</scope>
</reference>
<evidence type="ECO:0000250" key="1">
    <source>
        <dbReference type="UniProtKB" id="Q711Q0"/>
    </source>
</evidence>
<evidence type="ECO:0000256" key="2">
    <source>
        <dbReference type="SAM" id="MobiDB-lite"/>
    </source>
</evidence>
<evidence type="ECO:0000269" key="3">
    <source>
    </source>
</evidence>
<evidence type="ECO:0000303" key="4">
    <source>
    </source>
</evidence>
<gene>
    <name evidence="4" type="primary">CEFIP</name>
</gene>
<comment type="function">
    <text evidence="3">Plays an important role in cardiomyocyte hypertrophy via activation of the calcineurin/NFAT signaling pathway.</text>
</comment>
<comment type="subunit">
    <text evidence="1">Interacts with FHL2.</text>
</comment>
<comment type="subcellular location">
    <subcellularLocation>
        <location evidence="3">Cytoplasm</location>
        <location evidence="3">Myofibril</location>
        <location evidence="3">Sarcomere</location>
        <location evidence="3">Z line</location>
    </subcellularLocation>
</comment>
<organism>
    <name type="scientific">Rattus norvegicus</name>
    <name type="common">Rat</name>
    <dbReference type="NCBI Taxonomy" id="10116"/>
    <lineage>
        <taxon>Eukaryota</taxon>
        <taxon>Metazoa</taxon>
        <taxon>Chordata</taxon>
        <taxon>Craniata</taxon>
        <taxon>Vertebrata</taxon>
        <taxon>Euteleostomi</taxon>
        <taxon>Mammalia</taxon>
        <taxon>Eutheria</taxon>
        <taxon>Euarchontoglires</taxon>
        <taxon>Glires</taxon>
        <taxon>Rodentia</taxon>
        <taxon>Myomorpha</taxon>
        <taxon>Muroidea</taxon>
        <taxon>Muridae</taxon>
        <taxon>Murinae</taxon>
        <taxon>Rattus</taxon>
    </lineage>
</organism>
<dbReference type="EMBL" id="AC141211">
    <property type="status" value="NOT_ANNOTATED_CDS"/>
    <property type="molecule type" value="Genomic_DNA"/>
</dbReference>
<dbReference type="RefSeq" id="XP_006222177.1">
    <property type="nucleotide sequence ID" value="XM_006222115.3"/>
</dbReference>
<dbReference type="RefSeq" id="XP_006222179.1">
    <property type="nucleotide sequence ID" value="XM_006222117.3"/>
</dbReference>
<dbReference type="RefSeq" id="XP_006252819.1">
    <property type="nucleotide sequence ID" value="XM_006252757.3"/>
</dbReference>
<dbReference type="RefSeq" id="XP_017443025.1">
    <property type="nucleotide sequence ID" value="XM_017587536.1"/>
</dbReference>
<dbReference type="RefSeq" id="XP_017455785.1">
    <property type="nucleotide sequence ID" value="XM_017600296.1"/>
</dbReference>
<dbReference type="RefSeq" id="XP_573855.2">
    <property type="nucleotide sequence ID" value="XM_573855.6"/>
</dbReference>
<dbReference type="FunCoup" id="M0RD54">
    <property type="interactions" value="11"/>
</dbReference>
<dbReference type="STRING" id="10116.ENSRNOP00000067550"/>
<dbReference type="GlyGen" id="M0RD54">
    <property type="glycosylation" value="1 site"/>
</dbReference>
<dbReference type="iPTMnet" id="M0RD54"/>
<dbReference type="PhosphoSitePlus" id="M0RD54"/>
<dbReference type="PaxDb" id="10116-ENSRNOP00000067550"/>
<dbReference type="Ensembl" id="ENSRNOT00000073370.3">
    <property type="protein sequence ID" value="ENSRNOP00000067550.2"/>
    <property type="gene ID" value="ENSRNOG00000049942.3"/>
</dbReference>
<dbReference type="Ensembl" id="ENSRNOT00000098917.1">
    <property type="protein sequence ID" value="ENSRNOP00000081405.1"/>
    <property type="gene ID" value="ENSRNOG00000049942.3"/>
</dbReference>
<dbReference type="GeneID" id="498579"/>
<dbReference type="AGR" id="RGD:1564899"/>
<dbReference type="CTD" id="498579"/>
<dbReference type="RGD" id="1564899">
    <property type="gene designation" value="C16h10orf71"/>
</dbReference>
<dbReference type="eggNOG" id="ENOG502QVE3">
    <property type="taxonomic scope" value="Eukaryota"/>
</dbReference>
<dbReference type="GeneTree" id="ENSGT00730000111333"/>
<dbReference type="HOGENOM" id="CLU_255771_0_0_1"/>
<dbReference type="InParanoid" id="M0RD54"/>
<dbReference type="OMA" id="HYSPPFN"/>
<dbReference type="OrthoDB" id="8945866at2759"/>
<dbReference type="PRO" id="PR:M0RD54"/>
<dbReference type="Proteomes" id="UP000002494">
    <property type="component" value="Chromosome 16"/>
</dbReference>
<dbReference type="Bgee" id="ENSRNOG00000049942">
    <property type="expression patterns" value="Expressed in skeletal muscle tissue and 4 other cell types or tissues"/>
</dbReference>
<dbReference type="GO" id="GO:0030018">
    <property type="term" value="C:Z disc"/>
    <property type="evidence" value="ECO:0000314"/>
    <property type="project" value="UniProtKB"/>
</dbReference>
<dbReference type="GO" id="GO:0070886">
    <property type="term" value="P:positive regulation of calcineurin-NFAT signaling cascade"/>
    <property type="evidence" value="ECO:0000315"/>
    <property type="project" value="UniProtKB"/>
</dbReference>
<dbReference type="InterPro" id="IPR052303">
    <property type="entry name" value="CEFIP"/>
</dbReference>
<dbReference type="InterPro" id="IPR027838">
    <property type="entry name" value="DUF4585"/>
</dbReference>
<dbReference type="PANTHER" id="PTHR33775:SF2">
    <property type="entry name" value="CARDIAC-ENRICHED FHL2-INTERACTING PROTEIN"/>
    <property type="match status" value="1"/>
</dbReference>
<dbReference type="PANTHER" id="PTHR33775">
    <property type="entry name" value="CARDIAC-ENRICHED FHL2-INTERACTING PROTEIN-RELATED"/>
    <property type="match status" value="1"/>
</dbReference>
<dbReference type="Pfam" id="PF15232">
    <property type="entry name" value="DUF4585"/>
    <property type="match status" value="1"/>
</dbReference>
<protein>
    <recommendedName>
        <fullName evidence="4">Cardiac-enriched FHL2-interacting protein</fullName>
    </recommendedName>
</protein>
<feature type="chain" id="PRO_0000444579" description="Cardiac-enriched FHL2-interacting protein">
    <location>
        <begin position="1"/>
        <end position="1422"/>
    </location>
</feature>
<feature type="region of interest" description="Disordered" evidence="2">
    <location>
        <begin position="1"/>
        <end position="23"/>
    </location>
</feature>
<feature type="region of interest" description="Disordered" evidence="2">
    <location>
        <begin position="151"/>
        <end position="177"/>
    </location>
</feature>
<feature type="region of interest" description="Disordered" evidence="2">
    <location>
        <begin position="199"/>
        <end position="265"/>
    </location>
</feature>
<feature type="region of interest" description="Disordered" evidence="2">
    <location>
        <begin position="279"/>
        <end position="443"/>
    </location>
</feature>
<feature type="region of interest" description="Disordered" evidence="2">
    <location>
        <begin position="459"/>
        <end position="500"/>
    </location>
</feature>
<feature type="region of interest" description="Disordered" evidence="2">
    <location>
        <begin position="516"/>
        <end position="718"/>
    </location>
</feature>
<feature type="region of interest" description="Disordered" evidence="2">
    <location>
        <begin position="731"/>
        <end position="850"/>
    </location>
</feature>
<feature type="region of interest" description="Disordered" evidence="2">
    <location>
        <begin position="877"/>
        <end position="1127"/>
    </location>
</feature>
<feature type="region of interest" description="Disordered" evidence="2">
    <location>
        <begin position="1142"/>
        <end position="1244"/>
    </location>
</feature>
<feature type="region of interest" description="Disordered" evidence="2">
    <location>
        <begin position="1353"/>
        <end position="1422"/>
    </location>
</feature>
<feature type="compositionally biased region" description="Polar residues" evidence="2">
    <location>
        <begin position="201"/>
        <end position="210"/>
    </location>
</feature>
<feature type="compositionally biased region" description="Basic and acidic residues" evidence="2">
    <location>
        <begin position="284"/>
        <end position="298"/>
    </location>
</feature>
<feature type="compositionally biased region" description="Basic and acidic residues" evidence="2">
    <location>
        <begin position="305"/>
        <end position="315"/>
    </location>
</feature>
<feature type="compositionally biased region" description="Polar residues" evidence="2">
    <location>
        <begin position="342"/>
        <end position="351"/>
    </location>
</feature>
<feature type="compositionally biased region" description="Basic and acidic residues" evidence="2">
    <location>
        <begin position="395"/>
        <end position="405"/>
    </location>
</feature>
<feature type="compositionally biased region" description="Polar residues" evidence="2">
    <location>
        <begin position="461"/>
        <end position="470"/>
    </location>
</feature>
<feature type="compositionally biased region" description="Basic and acidic residues" evidence="2">
    <location>
        <begin position="481"/>
        <end position="495"/>
    </location>
</feature>
<feature type="compositionally biased region" description="Basic and acidic residues" evidence="2">
    <location>
        <begin position="524"/>
        <end position="537"/>
    </location>
</feature>
<feature type="compositionally biased region" description="Basic and acidic residues" evidence="2">
    <location>
        <begin position="579"/>
        <end position="588"/>
    </location>
</feature>
<feature type="compositionally biased region" description="Low complexity" evidence="2">
    <location>
        <begin position="590"/>
        <end position="606"/>
    </location>
</feature>
<feature type="compositionally biased region" description="Basic and acidic residues" evidence="2">
    <location>
        <begin position="611"/>
        <end position="622"/>
    </location>
</feature>
<feature type="compositionally biased region" description="Basic and acidic residues" evidence="2">
    <location>
        <begin position="635"/>
        <end position="644"/>
    </location>
</feature>
<feature type="compositionally biased region" description="Basic and acidic residues" evidence="2">
    <location>
        <begin position="653"/>
        <end position="675"/>
    </location>
</feature>
<feature type="compositionally biased region" description="Low complexity" evidence="2">
    <location>
        <begin position="731"/>
        <end position="744"/>
    </location>
</feature>
<feature type="compositionally biased region" description="Basic and acidic residues" evidence="2">
    <location>
        <begin position="790"/>
        <end position="801"/>
    </location>
</feature>
<feature type="compositionally biased region" description="Basic and acidic residues" evidence="2">
    <location>
        <begin position="828"/>
        <end position="839"/>
    </location>
</feature>
<feature type="compositionally biased region" description="Polar residues" evidence="2">
    <location>
        <begin position="907"/>
        <end position="926"/>
    </location>
</feature>
<feature type="compositionally biased region" description="Polar residues" evidence="2">
    <location>
        <begin position="944"/>
        <end position="954"/>
    </location>
</feature>
<feature type="compositionally biased region" description="Basic and acidic residues" evidence="2">
    <location>
        <begin position="975"/>
        <end position="991"/>
    </location>
</feature>
<feature type="compositionally biased region" description="Polar residues" evidence="2">
    <location>
        <begin position="1048"/>
        <end position="1067"/>
    </location>
</feature>
<feature type="compositionally biased region" description="Pro residues" evidence="2">
    <location>
        <begin position="1087"/>
        <end position="1099"/>
    </location>
</feature>
<feature type="compositionally biased region" description="Basic residues" evidence="2">
    <location>
        <begin position="1173"/>
        <end position="1184"/>
    </location>
</feature>
<feature type="compositionally biased region" description="Basic and acidic residues" evidence="2">
    <location>
        <begin position="1185"/>
        <end position="1202"/>
    </location>
</feature>
<feature type="compositionally biased region" description="Polar residues" evidence="2">
    <location>
        <begin position="1353"/>
        <end position="1366"/>
    </location>
</feature>
<feature type="compositionally biased region" description="Acidic residues" evidence="2">
    <location>
        <begin position="1411"/>
        <end position="1422"/>
    </location>
</feature>
<feature type="modified residue" description="Phosphothreonine" evidence="1">
    <location>
        <position position="119"/>
    </location>
</feature>
<feature type="modified residue" description="Phosphoserine" evidence="1">
    <location>
        <position position="327"/>
    </location>
</feature>
<feature type="modified residue" description="Phosphoserine" evidence="1">
    <location>
        <position position="472"/>
    </location>
</feature>
<feature type="modified residue" description="Phosphoserine" evidence="1">
    <location>
        <position position="815"/>
    </location>
</feature>
<proteinExistence type="inferred from homology"/>
<accession>M0RD54</accession>
<keyword id="KW-0963">Cytoplasm</keyword>
<keyword id="KW-0597">Phosphoprotein</keyword>
<keyword id="KW-1185">Reference proteome</keyword>